<feature type="chain" id="PRO_1000089495" description="Ribosome maturation factor RimM">
    <location>
        <begin position="1"/>
        <end position="168"/>
    </location>
</feature>
<feature type="domain" description="PRC barrel" evidence="1">
    <location>
        <begin position="95"/>
        <end position="168"/>
    </location>
</feature>
<comment type="function">
    <text evidence="1">An accessory protein needed during the final step in the assembly of 30S ribosomal subunit, possibly for assembly of the head region. Essential for efficient processing of 16S rRNA. May be needed both before and after RbfA during the maturation of 16S rRNA. It has affinity for free ribosomal 30S subunits but not for 70S ribosomes.</text>
</comment>
<comment type="subunit">
    <text evidence="1">Binds ribosomal protein uS19.</text>
</comment>
<comment type="subcellular location">
    <subcellularLocation>
        <location evidence="1">Cytoplasm</location>
    </subcellularLocation>
</comment>
<comment type="domain">
    <text evidence="1">The PRC barrel domain binds ribosomal protein uS19.</text>
</comment>
<comment type="similarity">
    <text evidence="1">Belongs to the RimM family.</text>
</comment>
<name>RIMM_COXB1</name>
<protein>
    <recommendedName>
        <fullName evidence="1">Ribosome maturation factor RimM</fullName>
    </recommendedName>
</protein>
<reference key="1">
    <citation type="journal article" date="2009" name="Infect. Immun.">
        <title>Comparative genomics reveal extensive transposon-mediated genomic plasticity and diversity among potential effector proteins within the genus Coxiella.</title>
        <authorList>
            <person name="Beare P.A."/>
            <person name="Unsworth N."/>
            <person name="Andoh M."/>
            <person name="Voth D.E."/>
            <person name="Omsland A."/>
            <person name="Gilk S.D."/>
            <person name="Williams K.P."/>
            <person name="Sobral B.W."/>
            <person name="Kupko J.J. III"/>
            <person name="Porcella S.F."/>
            <person name="Samuel J.E."/>
            <person name="Heinzen R.A."/>
        </authorList>
    </citation>
    <scope>NUCLEOTIDE SEQUENCE [LARGE SCALE GENOMIC DNA]</scope>
    <source>
        <strain>CbuK_Q154</strain>
    </source>
</reference>
<keyword id="KW-0143">Chaperone</keyword>
<keyword id="KW-0963">Cytoplasm</keyword>
<keyword id="KW-0690">Ribosome biogenesis</keyword>
<keyword id="KW-0698">rRNA processing</keyword>
<evidence type="ECO:0000255" key="1">
    <source>
        <dbReference type="HAMAP-Rule" id="MF_00014"/>
    </source>
</evidence>
<dbReference type="EMBL" id="CP001020">
    <property type="protein sequence ID" value="ACJ20588.1"/>
    <property type="molecule type" value="Genomic_DNA"/>
</dbReference>
<dbReference type="RefSeq" id="WP_012570823.1">
    <property type="nucleotide sequence ID" value="NC_011528.1"/>
</dbReference>
<dbReference type="SMR" id="B6J8I9"/>
<dbReference type="KEGG" id="cbc:CbuK_1414"/>
<dbReference type="HOGENOM" id="CLU_077636_1_0_6"/>
<dbReference type="GO" id="GO:0005737">
    <property type="term" value="C:cytoplasm"/>
    <property type="evidence" value="ECO:0007669"/>
    <property type="project" value="UniProtKB-SubCell"/>
</dbReference>
<dbReference type="GO" id="GO:0005840">
    <property type="term" value="C:ribosome"/>
    <property type="evidence" value="ECO:0007669"/>
    <property type="project" value="InterPro"/>
</dbReference>
<dbReference type="GO" id="GO:0043022">
    <property type="term" value="F:ribosome binding"/>
    <property type="evidence" value="ECO:0007669"/>
    <property type="project" value="InterPro"/>
</dbReference>
<dbReference type="GO" id="GO:0042274">
    <property type="term" value="P:ribosomal small subunit biogenesis"/>
    <property type="evidence" value="ECO:0007669"/>
    <property type="project" value="UniProtKB-UniRule"/>
</dbReference>
<dbReference type="GO" id="GO:0006364">
    <property type="term" value="P:rRNA processing"/>
    <property type="evidence" value="ECO:0007669"/>
    <property type="project" value="UniProtKB-UniRule"/>
</dbReference>
<dbReference type="Gene3D" id="2.30.30.240">
    <property type="entry name" value="PRC-barrel domain"/>
    <property type="match status" value="1"/>
</dbReference>
<dbReference type="Gene3D" id="2.40.30.60">
    <property type="entry name" value="RimM"/>
    <property type="match status" value="1"/>
</dbReference>
<dbReference type="HAMAP" id="MF_00014">
    <property type="entry name" value="Ribosome_mat_RimM"/>
    <property type="match status" value="1"/>
</dbReference>
<dbReference type="InterPro" id="IPR011033">
    <property type="entry name" value="PRC_barrel-like_sf"/>
</dbReference>
<dbReference type="InterPro" id="IPR056792">
    <property type="entry name" value="PRC_RimM"/>
</dbReference>
<dbReference type="InterPro" id="IPR011961">
    <property type="entry name" value="RimM"/>
</dbReference>
<dbReference type="InterPro" id="IPR002676">
    <property type="entry name" value="RimM_N"/>
</dbReference>
<dbReference type="InterPro" id="IPR036976">
    <property type="entry name" value="RimM_N_sf"/>
</dbReference>
<dbReference type="InterPro" id="IPR009000">
    <property type="entry name" value="Transl_B-barrel_sf"/>
</dbReference>
<dbReference type="NCBIfam" id="TIGR02273">
    <property type="entry name" value="16S_RimM"/>
    <property type="match status" value="1"/>
</dbReference>
<dbReference type="PANTHER" id="PTHR33692">
    <property type="entry name" value="RIBOSOME MATURATION FACTOR RIMM"/>
    <property type="match status" value="1"/>
</dbReference>
<dbReference type="PANTHER" id="PTHR33692:SF1">
    <property type="entry name" value="RIBOSOME MATURATION FACTOR RIMM"/>
    <property type="match status" value="1"/>
</dbReference>
<dbReference type="Pfam" id="PF24986">
    <property type="entry name" value="PRC_RimM"/>
    <property type="match status" value="1"/>
</dbReference>
<dbReference type="Pfam" id="PF01782">
    <property type="entry name" value="RimM"/>
    <property type="match status" value="1"/>
</dbReference>
<dbReference type="SUPFAM" id="SSF50346">
    <property type="entry name" value="PRC-barrel domain"/>
    <property type="match status" value="1"/>
</dbReference>
<dbReference type="SUPFAM" id="SSF50447">
    <property type="entry name" value="Translation proteins"/>
    <property type="match status" value="1"/>
</dbReference>
<sequence length="168" mass="19171">MKSNDKVIIGRLARPYGLRGWIKVVSFTHPIDNLLNHPTWQIQHNNEWQPLKLQAGKLHEPFLVVKLENIDDPETAKHYTNDLIAIERGALGALKEGDYYWTDLIGLAVVNTHGIELGTVDSLIETGSNDVLVVRSKERERLIPYTSYTIQSIDLEKKIIVVEWDADF</sequence>
<proteinExistence type="inferred from homology"/>
<accession>B6J8I9</accession>
<gene>
    <name evidence="1" type="primary">rimM</name>
    <name type="ordered locus">CbuK_1414</name>
</gene>
<organism>
    <name type="scientific">Coxiella burnetii (strain CbuK_Q154)</name>
    <name type="common">Coxiella burnetii (strain Q154)</name>
    <dbReference type="NCBI Taxonomy" id="434924"/>
    <lineage>
        <taxon>Bacteria</taxon>
        <taxon>Pseudomonadati</taxon>
        <taxon>Pseudomonadota</taxon>
        <taxon>Gammaproteobacteria</taxon>
        <taxon>Legionellales</taxon>
        <taxon>Coxiellaceae</taxon>
        <taxon>Coxiella</taxon>
    </lineage>
</organism>